<keyword id="KW-0963">Cytoplasm</keyword>
<keyword id="KW-0489">Methyltransferase</keyword>
<keyword id="KW-1185">Reference proteome</keyword>
<keyword id="KW-0698">rRNA processing</keyword>
<keyword id="KW-0949">S-adenosyl-L-methionine</keyword>
<keyword id="KW-0808">Transferase</keyword>
<gene>
    <name evidence="1" type="primary">rsmG</name>
    <name type="ordered locus">CV_0662</name>
</gene>
<accession>Q7P0A5</accession>
<evidence type="ECO:0000255" key="1">
    <source>
        <dbReference type="HAMAP-Rule" id="MF_00074"/>
    </source>
</evidence>
<dbReference type="EC" id="2.1.1.170" evidence="1"/>
<dbReference type="EMBL" id="AE016825">
    <property type="protein sequence ID" value="AAQ58338.1"/>
    <property type="molecule type" value="Genomic_DNA"/>
</dbReference>
<dbReference type="RefSeq" id="WP_011134217.1">
    <property type="nucleotide sequence ID" value="NC_005085.1"/>
</dbReference>
<dbReference type="SMR" id="Q7P0A5"/>
<dbReference type="STRING" id="243365.CV_0662"/>
<dbReference type="KEGG" id="cvi:CV_0662"/>
<dbReference type="eggNOG" id="COG0357">
    <property type="taxonomic scope" value="Bacteria"/>
</dbReference>
<dbReference type="HOGENOM" id="CLU_065341_2_0_4"/>
<dbReference type="OrthoDB" id="9808773at2"/>
<dbReference type="Proteomes" id="UP000001424">
    <property type="component" value="Chromosome"/>
</dbReference>
<dbReference type="GO" id="GO:0005829">
    <property type="term" value="C:cytosol"/>
    <property type="evidence" value="ECO:0007669"/>
    <property type="project" value="TreeGrafter"/>
</dbReference>
<dbReference type="GO" id="GO:0070043">
    <property type="term" value="F:rRNA (guanine-N7-)-methyltransferase activity"/>
    <property type="evidence" value="ECO:0007669"/>
    <property type="project" value="UniProtKB-UniRule"/>
</dbReference>
<dbReference type="CDD" id="cd02440">
    <property type="entry name" value="AdoMet_MTases"/>
    <property type="match status" value="1"/>
</dbReference>
<dbReference type="Gene3D" id="3.40.50.150">
    <property type="entry name" value="Vaccinia Virus protein VP39"/>
    <property type="match status" value="1"/>
</dbReference>
<dbReference type="HAMAP" id="MF_00074">
    <property type="entry name" value="16SrRNA_methyltr_G"/>
    <property type="match status" value="1"/>
</dbReference>
<dbReference type="InterPro" id="IPR003682">
    <property type="entry name" value="rRNA_ssu_MeTfrase_G"/>
</dbReference>
<dbReference type="InterPro" id="IPR029063">
    <property type="entry name" value="SAM-dependent_MTases_sf"/>
</dbReference>
<dbReference type="NCBIfam" id="TIGR00138">
    <property type="entry name" value="rsmG_gidB"/>
    <property type="match status" value="1"/>
</dbReference>
<dbReference type="PANTHER" id="PTHR31760">
    <property type="entry name" value="S-ADENOSYL-L-METHIONINE-DEPENDENT METHYLTRANSFERASES SUPERFAMILY PROTEIN"/>
    <property type="match status" value="1"/>
</dbReference>
<dbReference type="PANTHER" id="PTHR31760:SF0">
    <property type="entry name" value="S-ADENOSYL-L-METHIONINE-DEPENDENT METHYLTRANSFERASES SUPERFAMILY PROTEIN"/>
    <property type="match status" value="1"/>
</dbReference>
<dbReference type="Pfam" id="PF02527">
    <property type="entry name" value="GidB"/>
    <property type="match status" value="1"/>
</dbReference>
<dbReference type="PIRSF" id="PIRSF003078">
    <property type="entry name" value="GidB"/>
    <property type="match status" value="1"/>
</dbReference>
<dbReference type="SUPFAM" id="SSF53335">
    <property type="entry name" value="S-adenosyl-L-methionine-dependent methyltransferases"/>
    <property type="match status" value="1"/>
</dbReference>
<sequence>MTLHTAELKQGLAQLALELTEPQVELLQRYLALLVKWNQTYNLTAIRQEERMVSYHLLDSLSLVPHLAGGTRMLDVGSGGGMPGIPTAIARPDLQVALLDSNHKKTTFLRQVVLELGLPNVQVVTDRVEAYQPEQKFDRITSRAFSELSEFVKLTRHLMADDGQYVAMKGVYPYEEIALLPQGVAVSEVLPVTVPGLDAERHLVRMVLQ</sequence>
<reference key="1">
    <citation type="journal article" date="2003" name="Proc. Natl. Acad. Sci. U.S.A.">
        <title>The complete genome sequence of Chromobacterium violaceum reveals remarkable and exploitable bacterial adaptability.</title>
        <authorList>
            <person name="Vasconcelos A.T.R."/>
            <person name="de Almeida D.F."/>
            <person name="Hungria M."/>
            <person name="Guimaraes C.T."/>
            <person name="Antonio R.V."/>
            <person name="Almeida F.C."/>
            <person name="de Almeida L.G.P."/>
            <person name="de Almeida R."/>
            <person name="Alves-Gomes J.A."/>
            <person name="Andrade E.M."/>
            <person name="Araripe J."/>
            <person name="de Araujo M.F.F."/>
            <person name="Astolfi-Filho S."/>
            <person name="Azevedo V."/>
            <person name="Baptista A.J."/>
            <person name="Bataus L.A.M."/>
            <person name="Batista J.S."/>
            <person name="Belo A."/>
            <person name="van den Berg C."/>
            <person name="Bogo M."/>
            <person name="Bonatto S."/>
            <person name="Bordignon J."/>
            <person name="Brigido M.M."/>
            <person name="Brito C.A."/>
            <person name="Brocchi M."/>
            <person name="Burity H.A."/>
            <person name="Camargo A.A."/>
            <person name="Cardoso D.D.P."/>
            <person name="Carneiro N.P."/>
            <person name="Carraro D.M."/>
            <person name="Carvalho C.M.B."/>
            <person name="Cascardo J.C.M."/>
            <person name="Cavada B.S."/>
            <person name="Chueire L.M.O."/>
            <person name="Creczynski-Pasa T.B."/>
            <person name="Cunha-Junior N.C."/>
            <person name="Fagundes N."/>
            <person name="Falcao C.L."/>
            <person name="Fantinatti F."/>
            <person name="Farias I.P."/>
            <person name="Felipe M.S.S."/>
            <person name="Ferrari L.P."/>
            <person name="Ferro J.A."/>
            <person name="Ferro M.I.T."/>
            <person name="Franco G.R."/>
            <person name="Freitas N.S.A."/>
            <person name="Furlan L.R."/>
            <person name="Gazzinelli R.T."/>
            <person name="Gomes E.A."/>
            <person name="Goncalves P.R."/>
            <person name="Grangeiro T.B."/>
            <person name="Grattapaglia D."/>
            <person name="Grisard E.C."/>
            <person name="Hanna E.S."/>
            <person name="Jardim S.N."/>
            <person name="Laurino J."/>
            <person name="Leoi L.C.T."/>
            <person name="Lima L.F.A."/>
            <person name="Loureiro M.F."/>
            <person name="Lyra M.C.C.P."/>
            <person name="Madeira H.M.F."/>
            <person name="Manfio G.P."/>
            <person name="Maranhao A.Q."/>
            <person name="Martins W.S."/>
            <person name="di Mauro S.M.Z."/>
            <person name="de Medeiros S.R.B."/>
            <person name="Meissner R.V."/>
            <person name="Moreira M.A.M."/>
            <person name="Nascimento F.F."/>
            <person name="Nicolas M.F."/>
            <person name="Oliveira J.G."/>
            <person name="Oliveira S.C."/>
            <person name="Paixao R.F.C."/>
            <person name="Parente J.A."/>
            <person name="Pedrosa F.O."/>
            <person name="Pena S.D.J."/>
            <person name="Pereira J.O."/>
            <person name="Pereira M."/>
            <person name="Pinto L.S.R.C."/>
            <person name="Pinto L.S."/>
            <person name="Porto J.I.R."/>
            <person name="Potrich D.P."/>
            <person name="Ramalho-Neto C.E."/>
            <person name="Reis A.M.M."/>
            <person name="Rigo L.U."/>
            <person name="Rondinelli E."/>
            <person name="Santos E.B.P."/>
            <person name="Santos F.R."/>
            <person name="Schneider M.P.C."/>
            <person name="Seuanez H.N."/>
            <person name="Silva A.M.R."/>
            <person name="da Silva A.L.C."/>
            <person name="Silva D.W."/>
            <person name="Silva R."/>
            <person name="Simoes I.C."/>
            <person name="Simon D."/>
            <person name="Soares C.M.A."/>
            <person name="Soares R.B.A."/>
            <person name="Souza E.M."/>
            <person name="Souza K.R.L."/>
            <person name="Souza R.C."/>
            <person name="Steffens M.B.R."/>
            <person name="Steindel M."/>
            <person name="Teixeira S.R."/>
            <person name="Urmenyi T."/>
            <person name="Vettore A."/>
            <person name="Wassem R."/>
            <person name="Zaha A."/>
            <person name="Simpson A.J.G."/>
        </authorList>
    </citation>
    <scope>NUCLEOTIDE SEQUENCE [LARGE SCALE GENOMIC DNA]</scope>
    <source>
        <strain>ATCC 12472 / DSM 30191 / JCM 1249 / CCUG 213 / NBRC 12614 / NCIMB 9131 / NCTC 9757 / MK</strain>
    </source>
</reference>
<organism>
    <name type="scientific">Chromobacterium violaceum (strain ATCC 12472 / DSM 30191 / JCM 1249 / CCUG 213 / NBRC 12614 / NCIMB 9131 / NCTC 9757 / MK)</name>
    <dbReference type="NCBI Taxonomy" id="243365"/>
    <lineage>
        <taxon>Bacteria</taxon>
        <taxon>Pseudomonadati</taxon>
        <taxon>Pseudomonadota</taxon>
        <taxon>Betaproteobacteria</taxon>
        <taxon>Neisseriales</taxon>
        <taxon>Chromobacteriaceae</taxon>
        <taxon>Chromobacterium</taxon>
    </lineage>
</organism>
<name>RSMG_CHRVO</name>
<proteinExistence type="inferred from homology"/>
<feature type="chain" id="PRO_0000184235" description="Ribosomal RNA small subunit methyltransferase G">
    <location>
        <begin position="1"/>
        <end position="209"/>
    </location>
</feature>
<feature type="binding site" evidence="1">
    <location>
        <position position="77"/>
    </location>
    <ligand>
        <name>S-adenosyl-L-methionine</name>
        <dbReference type="ChEBI" id="CHEBI:59789"/>
    </ligand>
</feature>
<feature type="binding site" evidence="1">
    <location>
        <position position="82"/>
    </location>
    <ligand>
        <name>S-adenosyl-L-methionine</name>
        <dbReference type="ChEBI" id="CHEBI:59789"/>
    </ligand>
</feature>
<feature type="binding site" evidence="1">
    <location>
        <begin position="128"/>
        <end position="129"/>
    </location>
    <ligand>
        <name>S-adenosyl-L-methionine</name>
        <dbReference type="ChEBI" id="CHEBI:59789"/>
    </ligand>
</feature>
<feature type="binding site" evidence="1">
    <location>
        <position position="143"/>
    </location>
    <ligand>
        <name>S-adenosyl-L-methionine</name>
        <dbReference type="ChEBI" id="CHEBI:59789"/>
    </ligand>
</feature>
<comment type="function">
    <text evidence="1">Specifically methylates the N7 position of guanine in position 527 of 16S rRNA.</text>
</comment>
<comment type="catalytic activity">
    <reaction evidence="1">
        <text>guanosine(527) in 16S rRNA + S-adenosyl-L-methionine = N(7)-methylguanosine(527) in 16S rRNA + S-adenosyl-L-homocysteine</text>
        <dbReference type="Rhea" id="RHEA:42732"/>
        <dbReference type="Rhea" id="RHEA-COMP:10209"/>
        <dbReference type="Rhea" id="RHEA-COMP:10210"/>
        <dbReference type="ChEBI" id="CHEBI:57856"/>
        <dbReference type="ChEBI" id="CHEBI:59789"/>
        <dbReference type="ChEBI" id="CHEBI:74269"/>
        <dbReference type="ChEBI" id="CHEBI:74480"/>
        <dbReference type="EC" id="2.1.1.170"/>
    </reaction>
</comment>
<comment type="subcellular location">
    <subcellularLocation>
        <location evidence="1">Cytoplasm</location>
    </subcellularLocation>
</comment>
<comment type="similarity">
    <text evidence="1">Belongs to the methyltransferase superfamily. RNA methyltransferase RsmG family.</text>
</comment>
<protein>
    <recommendedName>
        <fullName evidence="1">Ribosomal RNA small subunit methyltransferase G</fullName>
        <ecNumber evidence="1">2.1.1.170</ecNumber>
    </recommendedName>
    <alternativeName>
        <fullName evidence="1">16S rRNA 7-methylguanosine methyltransferase</fullName>
        <shortName evidence="1">16S rRNA m7G methyltransferase</shortName>
    </alternativeName>
</protein>